<feature type="chain" id="PRO_0000095575" description="Ferric uptake regulation protein">
    <location>
        <begin position="1"/>
        <end position="136"/>
    </location>
</feature>
<feature type="region of interest" description="DNA-binding" evidence="1">
    <location>
        <begin position="1"/>
        <end position="85"/>
    </location>
</feature>
<feature type="region of interest" description="Dimerization" evidence="1">
    <location>
        <begin position="86"/>
        <end position="136"/>
    </location>
</feature>
<feature type="binding site" evidence="1">
    <location>
        <position position="88"/>
    </location>
    <ligand>
        <name>Fe cation</name>
        <dbReference type="ChEBI" id="CHEBI:24875"/>
    </ligand>
</feature>
<feature type="binding site" evidence="1">
    <location>
        <position position="90"/>
    </location>
    <ligand>
        <name>Fe cation</name>
        <dbReference type="ChEBI" id="CHEBI:24875"/>
    </ligand>
</feature>
<feature type="binding site" evidence="1">
    <location>
        <position position="94"/>
    </location>
    <ligand>
        <name>Zn(2+)</name>
        <dbReference type="ChEBI" id="CHEBI:29105"/>
    </ligand>
</feature>
<feature type="binding site" evidence="1">
    <location>
        <position position="97"/>
    </location>
    <ligand>
        <name>Zn(2+)</name>
        <dbReference type="ChEBI" id="CHEBI:29105"/>
    </ligand>
</feature>
<feature type="binding site" evidence="1">
    <location>
        <position position="109"/>
    </location>
    <ligand>
        <name>Fe cation</name>
        <dbReference type="ChEBI" id="CHEBI:24875"/>
    </ligand>
</feature>
<feature type="binding site" evidence="1">
    <location>
        <position position="123"/>
    </location>
    <ligand>
        <name>Fe cation</name>
        <dbReference type="ChEBI" id="CHEBI:24875"/>
    </ligand>
</feature>
<comment type="function">
    <text evidence="1">Acts as a global negative controlling element, employing Fe(2+) as a cofactor to bind the operator of the repressed genes.</text>
</comment>
<comment type="subunit">
    <text evidence="1">Homodimer.</text>
</comment>
<comment type="subcellular location">
    <subcellularLocation>
        <location evidence="1">Cytoplasm</location>
    </subcellularLocation>
</comment>
<comment type="similarity">
    <text evidence="2">Belongs to the Fur family.</text>
</comment>
<protein>
    <recommendedName>
        <fullName>Ferric uptake regulation protein</fullName>
        <shortName>Ferric uptake regulator</shortName>
    </recommendedName>
</protein>
<evidence type="ECO:0000250" key="1"/>
<evidence type="ECO:0000305" key="2"/>
<accession>Q6GGE5</accession>
<name>FUR_STAAR</name>
<proteinExistence type="inferred from homology"/>
<keyword id="KW-0963">Cytoplasm</keyword>
<keyword id="KW-0238">DNA-binding</keyword>
<keyword id="KW-0408">Iron</keyword>
<keyword id="KW-0479">Metal-binding</keyword>
<keyword id="KW-0678">Repressor</keyword>
<keyword id="KW-0804">Transcription</keyword>
<keyword id="KW-0805">Transcription regulation</keyword>
<keyword id="KW-0862">Zinc</keyword>
<organism>
    <name type="scientific">Staphylococcus aureus (strain MRSA252)</name>
    <dbReference type="NCBI Taxonomy" id="282458"/>
    <lineage>
        <taxon>Bacteria</taxon>
        <taxon>Bacillati</taxon>
        <taxon>Bacillota</taxon>
        <taxon>Bacilli</taxon>
        <taxon>Bacillales</taxon>
        <taxon>Staphylococcaceae</taxon>
        <taxon>Staphylococcus</taxon>
    </lineage>
</organism>
<reference key="1">
    <citation type="journal article" date="2004" name="Proc. Natl. Acad. Sci. U.S.A.">
        <title>Complete genomes of two clinical Staphylococcus aureus strains: evidence for the rapid evolution of virulence and drug resistance.</title>
        <authorList>
            <person name="Holden M.T.G."/>
            <person name="Feil E.J."/>
            <person name="Lindsay J.A."/>
            <person name="Peacock S.J."/>
            <person name="Day N.P.J."/>
            <person name="Enright M.C."/>
            <person name="Foster T.J."/>
            <person name="Moore C.E."/>
            <person name="Hurst L."/>
            <person name="Atkin R."/>
            <person name="Barron A."/>
            <person name="Bason N."/>
            <person name="Bentley S.D."/>
            <person name="Chillingworth C."/>
            <person name="Chillingworth T."/>
            <person name="Churcher C."/>
            <person name="Clark L."/>
            <person name="Corton C."/>
            <person name="Cronin A."/>
            <person name="Doggett J."/>
            <person name="Dowd L."/>
            <person name="Feltwell T."/>
            <person name="Hance Z."/>
            <person name="Harris B."/>
            <person name="Hauser H."/>
            <person name="Holroyd S."/>
            <person name="Jagels K."/>
            <person name="James K.D."/>
            <person name="Lennard N."/>
            <person name="Line A."/>
            <person name="Mayes R."/>
            <person name="Moule S."/>
            <person name="Mungall K."/>
            <person name="Ormond D."/>
            <person name="Quail M.A."/>
            <person name="Rabbinowitsch E."/>
            <person name="Rutherford K.M."/>
            <person name="Sanders M."/>
            <person name="Sharp S."/>
            <person name="Simmonds M."/>
            <person name="Stevens K."/>
            <person name="Whitehead S."/>
            <person name="Barrell B.G."/>
            <person name="Spratt B.G."/>
            <person name="Parkhill J."/>
        </authorList>
    </citation>
    <scope>NUCLEOTIDE SEQUENCE [LARGE SCALE GENOMIC DNA]</scope>
    <source>
        <strain>MRSA252</strain>
    </source>
</reference>
<gene>
    <name type="primary">fur</name>
    <name type="synonym">furA</name>
    <name type="synonym">mreR</name>
    <name type="ordered locus">SAR1631</name>
</gene>
<dbReference type="EMBL" id="BX571856">
    <property type="protein sequence ID" value="CAG40626.1"/>
    <property type="molecule type" value="Genomic_DNA"/>
</dbReference>
<dbReference type="RefSeq" id="WP_001095260.1">
    <property type="nucleotide sequence ID" value="NC_002952.2"/>
</dbReference>
<dbReference type="SMR" id="Q6GGE5"/>
<dbReference type="KEGG" id="sar:SAR1631"/>
<dbReference type="HOGENOM" id="CLU_096072_5_1_9"/>
<dbReference type="Proteomes" id="UP000000596">
    <property type="component" value="Chromosome"/>
</dbReference>
<dbReference type="GO" id="GO:0005737">
    <property type="term" value="C:cytoplasm"/>
    <property type="evidence" value="ECO:0007669"/>
    <property type="project" value="UniProtKB-SubCell"/>
</dbReference>
<dbReference type="GO" id="GO:0003700">
    <property type="term" value="F:DNA-binding transcription factor activity"/>
    <property type="evidence" value="ECO:0007669"/>
    <property type="project" value="InterPro"/>
</dbReference>
<dbReference type="GO" id="GO:0000976">
    <property type="term" value="F:transcription cis-regulatory region binding"/>
    <property type="evidence" value="ECO:0007669"/>
    <property type="project" value="TreeGrafter"/>
</dbReference>
<dbReference type="GO" id="GO:0008270">
    <property type="term" value="F:zinc ion binding"/>
    <property type="evidence" value="ECO:0007669"/>
    <property type="project" value="TreeGrafter"/>
</dbReference>
<dbReference type="GO" id="GO:0045892">
    <property type="term" value="P:negative regulation of DNA-templated transcription"/>
    <property type="evidence" value="ECO:0007669"/>
    <property type="project" value="TreeGrafter"/>
</dbReference>
<dbReference type="GO" id="GO:1900376">
    <property type="term" value="P:regulation of secondary metabolite biosynthetic process"/>
    <property type="evidence" value="ECO:0007669"/>
    <property type="project" value="TreeGrafter"/>
</dbReference>
<dbReference type="CDD" id="cd07153">
    <property type="entry name" value="Fur_like"/>
    <property type="match status" value="1"/>
</dbReference>
<dbReference type="Gene3D" id="3.30.1490.190">
    <property type="match status" value="1"/>
</dbReference>
<dbReference type="Gene3D" id="1.10.10.10">
    <property type="entry name" value="Winged helix-like DNA-binding domain superfamily/Winged helix DNA-binding domain"/>
    <property type="match status" value="1"/>
</dbReference>
<dbReference type="InterPro" id="IPR002481">
    <property type="entry name" value="FUR"/>
</dbReference>
<dbReference type="InterPro" id="IPR043135">
    <property type="entry name" value="Fur_C"/>
</dbReference>
<dbReference type="InterPro" id="IPR036388">
    <property type="entry name" value="WH-like_DNA-bd_sf"/>
</dbReference>
<dbReference type="InterPro" id="IPR036390">
    <property type="entry name" value="WH_DNA-bd_sf"/>
</dbReference>
<dbReference type="PANTHER" id="PTHR33202:SF1">
    <property type="entry name" value="FERRIC UPTAKE REGULATION PROTEIN"/>
    <property type="match status" value="1"/>
</dbReference>
<dbReference type="PANTHER" id="PTHR33202">
    <property type="entry name" value="ZINC UPTAKE REGULATION PROTEIN"/>
    <property type="match status" value="1"/>
</dbReference>
<dbReference type="Pfam" id="PF01475">
    <property type="entry name" value="FUR"/>
    <property type="match status" value="1"/>
</dbReference>
<dbReference type="SUPFAM" id="SSF46785">
    <property type="entry name" value="Winged helix' DNA-binding domain"/>
    <property type="match status" value="1"/>
</dbReference>
<sequence>MNTNDAIKILKENGLKYTDKRKDMLDIFVEEDKYINAKYIQQVMDENYPGISFDTIYRNLHLFKDLGIIENTELDGEMKFRIACTNHHHHHFICEKCGDTKVIDYCPIDQIKLSLPGVNIHKHKLEVYGVCESCQD</sequence>